<feature type="chain" id="PRO_1000000674" description="Thymidylate synthase">
    <location>
        <begin position="1"/>
        <end position="264"/>
    </location>
</feature>
<feature type="active site" description="Nucleophile" evidence="1">
    <location>
        <position position="146"/>
    </location>
</feature>
<feature type="binding site" description="in other chain" evidence="1">
    <location>
        <position position="21"/>
    </location>
    <ligand>
        <name>dUMP</name>
        <dbReference type="ChEBI" id="CHEBI:246422"/>
        <note>ligand shared between dimeric partners</note>
    </ligand>
</feature>
<feature type="binding site" evidence="1">
    <location>
        <position position="51"/>
    </location>
    <ligand>
        <name>(6R)-5,10-methylene-5,6,7,8-tetrahydrofolate</name>
        <dbReference type="ChEBI" id="CHEBI:15636"/>
    </ligand>
</feature>
<feature type="binding site" evidence="1">
    <location>
        <begin position="126"/>
        <end position="127"/>
    </location>
    <ligand>
        <name>dUMP</name>
        <dbReference type="ChEBI" id="CHEBI:246422"/>
        <note>ligand shared between dimeric partners</note>
    </ligand>
</feature>
<feature type="binding site" description="in other chain" evidence="1">
    <location>
        <begin position="166"/>
        <end position="169"/>
    </location>
    <ligand>
        <name>dUMP</name>
        <dbReference type="ChEBI" id="CHEBI:246422"/>
        <note>ligand shared between dimeric partners</note>
    </ligand>
</feature>
<feature type="binding site" evidence="1">
    <location>
        <position position="169"/>
    </location>
    <ligand>
        <name>(6R)-5,10-methylene-5,6,7,8-tetrahydrofolate</name>
        <dbReference type="ChEBI" id="CHEBI:15636"/>
    </ligand>
</feature>
<feature type="binding site" description="in other chain" evidence="1">
    <location>
        <position position="177"/>
    </location>
    <ligand>
        <name>dUMP</name>
        <dbReference type="ChEBI" id="CHEBI:246422"/>
        <note>ligand shared between dimeric partners</note>
    </ligand>
</feature>
<feature type="binding site" description="in other chain" evidence="1">
    <location>
        <begin position="207"/>
        <end position="209"/>
    </location>
    <ligand>
        <name>dUMP</name>
        <dbReference type="ChEBI" id="CHEBI:246422"/>
        <note>ligand shared between dimeric partners</note>
    </ligand>
</feature>
<feature type="binding site" evidence="1">
    <location>
        <position position="263"/>
    </location>
    <ligand>
        <name>(6R)-5,10-methylene-5,6,7,8-tetrahydrofolate</name>
        <dbReference type="ChEBI" id="CHEBI:15636"/>
    </ligand>
</feature>
<organism>
    <name type="scientific">Shewanella sp. (strain ANA-3)</name>
    <dbReference type="NCBI Taxonomy" id="94122"/>
    <lineage>
        <taxon>Bacteria</taxon>
        <taxon>Pseudomonadati</taxon>
        <taxon>Pseudomonadota</taxon>
        <taxon>Gammaproteobacteria</taxon>
        <taxon>Alteromonadales</taxon>
        <taxon>Shewanellaceae</taxon>
        <taxon>Shewanella</taxon>
    </lineage>
</organism>
<evidence type="ECO:0000255" key="1">
    <source>
        <dbReference type="HAMAP-Rule" id="MF_00008"/>
    </source>
</evidence>
<sequence>MQQYLDLMKHILAEGVDKSDRTGTGTRSVFGYQMRFDLSKGFPLVTTKKCHMRSIIHELLWFLKGDTNIAYLRENKVSIWDEWADENGDLGPVYGAQWRSWPTQSGDAIDQIAQVIAQIKSQPDSRRLIVSAWNVGELDKMALAPCHAFFQFYVADGKLSCQLYQRSCDVFLGLPFNIASYALLTMMVAQQCDLALGDFVWTGGDTHLYSNHMEQTALQLSREPRQLPTMTILRKPASIFDYQFEDFELTHYDPHPHIKAPVAV</sequence>
<comment type="function">
    <text evidence="1">Catalyzes the reductive methylation of 2'-deoxyuridine-5'-monophosphate (dUMP) to 2'-deoxythymidine-5'-monophosphate (dTMP) while utilizing 5,10-methylenetetrahydrofolate (mTHF) as the methyl donor and reductant in the reaction, yielding dihydrofolate (DHF) as a by-product. This enzymatic reaction provides an intracellular de novo source of dTMP, an essential precursor for DNA biosynthesis.</text>
</comment>
<comment type="catalytic activity">
    <reaction evidence="1">
        <text>dUMP + (6R)-5,10-methylene-5,6,7,8-tetrahydrofolate = 7,8-dihydrofolate + dTMP</text>
        <dbReference type="Rhea" id="RHEA:12104"/>
        <dbReference type="ChEBI" id="CHEBI:15636"/>
        <dbReference type="ChEBI" id="CHEBI:57451"/>
        <dbReference type="ChEBI" id="CHEBI:63528"/>
        <dbReference type="ChEBI" id="CHEBI:246422"/>
        <dbReference type="EC" id="2.1.1.45"/>
    </reaction>
</comment>
<comment type="pathway">
    <text evidence="1">Pyrimidine metabolism; dTTP biosynthesis.</text>
</comment>
<comment type="subunit">
    <text evidence="1">Homodimer.</text>
</comment>
<comment type="subcellular location">
    <subcellularLocation>
        <location evidence="1">Cytoplasm</location>
    </subcellularLocation>
</comment>
<comment type="similarity">
    <text evidence="1">Belongs to the thymidylate synthase family. Bacterial-type ThyA subfamily.</text>
</comment>
<name>TYSY_SHESA</name>
<dbReference type="EC" id="2.1.1.45" evidence="1"/>
<dbReference type="EMBL" id="CP000469">
    <property type="protein sequence ID" value="ABK49264.1"/>
    <property type="molecule type" value="Genomic_DNA"/>
</dbReference>
<dbReference type="RefSeq" id="WP_011717884.1">
    <property type="nucleotide sequence ID" value="NC_008577.1"/>
</dbReference>
<dbReference type="SMR" id="A0KZP5"/>
<dbReference type="STRING" id="94122.Shewana3_3039"/>
<dbReference type="KEGG" id="shn:Shewana3_3039"/>
<dbReference type="eggNOG" id="COG0207">
    <property type="taxonomic scope" value="Bacteria"/>
</dbReference>
<dbReference type="HOGENOM" id="CLU_021669_0_0_6"/>
<dbReference type="OrthoDB" id="9774633at2"/>
<dbReference type="UniPathway" id="UPA00575"/>
<dbReference type="Proteomes" id="UP000002589">
    <property type="component" value="Chromosome"/>
</dbReference>
<dbReference type="GO" id="GO:0005829">
    <property type="term" value="C:cytosol"/>
    <property type="evidence" value="ECO:0007669"/>
    <property type="project" value="TreeGrafter"/>
</dbReference>
<dbReference type="GO" id="GO:0004799">
    <property type="term" value="F:thymidylate synthase activity"/>
    <property type="evidence" value="ECO:0007669"/>
    <property type="project" value="UniProtKB-UniRule"/>
</dbReference>
<dbReference type="GO" id="GO:0006231">
    <property type="term" value="P:dTMP biosynthetic process"/>
    <property type="evidence" value="ECO:0007669"/>
    <property type="project" value="UniProtKB-UniRule"/>
</dbReference>
<dbReference type="GO" id="GO:0006235">
    <property type="term" value="P:dTTP biosynthetic process"/>
    <property type="evidence" value="ECO:0007669"/>
    <property type="project" value="UniProtKB-UniRule"/>
</dbReference>
<dbReference type="GO" id="GO:0032259">
    <property type="term" value="P:methylation"/>
    <property type="evidence" value="ECO:0007669"/>
    <property type="project" value="UniProtKB-KW"/>
</dbReference>
<dbReference type="CDD" id="cd00351">
    <property type="entry name" value="TS_Pyrimidine_HMase"/>
    <property type="match status" value="1"/>
</dbReference>
<dbReference type="FunFam" id="3.30.572.10:FF:000001">
    <property type="entry name" value="Thymidylate synthase"/>
    <property type="match status" value="1"/>
</dbReference>
<dbReference type="Gene3D" id="3.30.572.10">
    <property type="entry name" value="Thymidylate synthase/dCMP hydroxymethylase domain"/>
    <property type="match status" value="1"/>
</dbReference>
<dbReference type="HAMAP" id="MF_00008">
    <property type="entry name" value="Thymidy_synth_bact"/>
    <property type="match status" value="1"/>
</dbReference>
<dbReference type="InterPro" id="IPR045097">
    <property type="entry name" value="Thymidate_synth/dCMP_Mease"/>
</dbReference>
<dbReference type="InterPro" id="IPR023451">
    <property type="entry name" value="Thymidate_synth/dCMP_Mease_dom"/>
</dbReference>
<dbReference type="InterPro" id="IPR036926">
    <property type="entry name" value="Thymidate_synth/dCMP_Mease_sf"/>
</dbReference>
<dbReference type="InterPro" id="IPR000398">
    <property type="entry name" value="Thymidylate_synthase"/>
</dbReference>
<dbReference type="InterPro" id="IPR020940">
    <property type="entry name" value="Thymidylate_synthase_AS"/>
</dbReference>
<dbReference type="NCBIfam" id="NF002497">
    <property type="entry name" value="PRK01827.1-3"/>
    <property type="match status" value="1"/>
</dbReference>
<dbReference type="NCBIfam" id="NF002499">
    <property type="entry name" value="PRK01827.1-5"/>
    <property type="match status" value="1"/>
</dbReference>
<dbReference type="NCBIfam" id="TIGR03284">
    <property type="entry name" value="thym_sym"/>
    <property type="match status" value="2"/>
</dbReference>
<dbReference type="PANTHER" id="PTHR11548:SF9">
    <property type="entry name" value="THYMIDYLATE SYNTHASE"/>
    <property type="match status" value="1"/>
</dbReference>
<dbReference type="PANTHER" id="PTHR11548">
    <property type="entry name" value="THYMIDYLATE SYNTHASE 1"/>
    <property type="match status" value="1"/>
</dbReference>
<dbReference type="Pfam" id="PF00303">
    <property type="entry name" value="Thymidylat_synt"/>
    <property type="match status" value="1"/>
</dbReference>
<dbReference type="PRINTS" id="PR00108">
    <property type="entry name" value="THYMDSNTHASE"/>
</dbReference>
<dbReference type="SUPFAM" id="SSF55831">
    <property type="entry name" value="Thymidylate synthase/dCMP hydroxymethylase"/>
    <property type="match status" value="1"/>
</dbReference>
<dbReference type="PROSITE" id="PS00091">
    <property type="entry name" value="THYMIDYLATE_SYNTHASE"/>
    <property type="match status" value="1"/>
</dbReference>
<reference key="1">
    <citation type="submission" date="2006-09" db="EMBL/GenBank/DDBJ databases">
        <title>Complete sequence of chromosome 1 of Shewanella sp. ANA-3.</title>
        <authorList>
            <person name="Copeland A."/>
            <person name="Lucas S."/>
            <person name="Lapidus A."/>
            <person name="Barry K."/>
            <person name="Detter J.C."/>
            <person name="Glavina del Rio T."/>
            <person name="Hammon N."/>
            <person name="Israni S."/>
            <person name="Dalin E."/>
            <person name="Tice H."/>
            <person name="Pitluck S."/>
            <person name="Chertkov O."/>
            <person name="Brettin T."/>
            <person name="Bruce D."/>
            <person name="Han C."/>
            <person name="Tapia R."/>
            <person name="Gilna P."/>
            <person name="Schmutz J."/>
            <person name="Larimer F."/>
            <person name="Land M."/>
            <person name="Hauser L."/>
            <person name="Kyrpides N."/>
            <person name="Kim E."/>
            <person name="Newman D."/>
            <person name="Salticov C."/>
            <person name="Konstantinidis K."/>
            <person name="Klappenback J."/>
            <person name="Tiedje J."/>
            <person name="Richardson P."/>
        </authorList>
    </citation>
    <scope>NUCLEOTIDE SEQUENCE [LARGE SCALE GENOMIC DNA]</scope>
    <source>
        <strain>ANA-3</strain>
    </source>
</reference>
<gene>
    <name evidence="1" type="primary">thyA</name>
    <name type="ordered locus">Shewana3_3039</name>
</gene>
<accession>A0KZP5</accession>
<proteinExistence type="inferred from homology"/>
<keyword id="KW-0963">Cytoplasm</keyword>
<keyword id="KW-0489">Methyltransferase</keyword>
<keyword id="KW-0545">Nucleotide biosynthesis</keyword>
<keyword id="KW-0808">Transferase</keyword>
<protein>
    <recommendedName>
        <fullName evidence="1">Thymidylate synthase</fullName>
        <shortName evidence="1">TS</shortName>
        <shortName evidence="1">TSase</shortName>
        <ecNumber evidence="1">2.1.1.45</ecNumber>
    </recommendedName>
</protein>